<reference key="1">
    <citation type="submission" date="2007-05" db="EMBL/GenBank/DDBJ databases">
        <title>Complete sequence of chromosome of Psychrobacter sp. PRwf-1.</title>
        <authorList>
            <consortium name="US DOE Joint Genome Institute"/>
            <person name="Copeland A."/>
            <person name="Lucas S."/>
            <person name="Lapidus A."/>
            <person name="Barry K."/>
            <person name="Detter J.C."/>
            <person name="Glavina del Rio T."/>
            <person name="Hammon N."/>
            <person name="Israni S."/>
            <person name="Dalin E."/>
            <person name="Tice H."/>
            <person name="Pitluck S."/>
            <person name="Chain P."/>
            <person name="Malfatti S."/>
            <person name="Shin M."/>
            <person name="Vergez L."/>
            <person name="Schmutz J."/>
            <person name="Larimer F."/>
            <person name="Land M."/>
            <person name="Hauser L."/>
            <person name="Kyrpides N."/>
            <person name="Kim E."/>
            <person name="Tiedje J."/>
            <person name="Richardson P."/>
        </authorList>
    </citation>
    <scope>NUCLEOTIDE SEQUENCE [LARGE SCALE GENOMIC DNA]</scope>
    <source>
        <strain>PRwf-1</strain>
    </source>
</reference>
<gene>
    <name evidence="1" type="primary">rplC</name>
    <name type="ordered locus">PsycPRwf_0426</name>
</gene>
<protein>
    <recommendedName>
        <fullName evidence="1">Large ribosomal subunit protein uL3</fullName>
    </recommendedName>
    <alternativeName>
        <fullName evidence="3">50S ribosomal protein L3</fullName>
    </alternativeName>
</protein>
<keyword id="KW-0488">Methylation</keyword>
<keyword id="KW-0687">Ribonucleoprotein</keyword>
<keyword id="KW-0689">Ribosomal protein</keyword>
<keyword id="KW-0694">RNA-binding</keyword>
<keyword id="KW-0699">rRNA-binding</keyword>
<dbReference type="EMBL" id="CP000713">
    <property type="protein sequence ID" value="ABQ93381.1"/>
    <property type="molecule type" value="Genomic_DNA"/>
</dbReference>
<dbReference type="SMR" id="A5WCJ0"/>
<dbReference type="STRING" id="349106.PsycPRwf_0426"/>
<dbReference type="KEGG" id="prw:PsycPRwf_0426"/>
<dbReference type="eggNOG" id="COG0087">
    <property type="taxonomic scope" value="Bacteria"/>
</dbReference>
<dbReference type="HOGENOM" id="CLU_044142_4_1_6"/>
<dbReference type="GO" id="GO:0022625">
    <property type="term" value="C:cytosolic large ribosomal subunit"/>
    <property type="evidence" value="ECO:0007669"/>
    <property type="project" value="TreeGrafter"/>
</dbReference>
<dbReference type="GO" id="GO:0019843">
    <property type="term" value="F:rRNA binding"/>
    <property type="evidence" value="ECO:0007669"/>
    <property type="project" value="UniProtKB-UniRule"/>
</dbReference>
<dbReference type="GO" id="GO:0003735">
    <property type="term" value="F:structural constituent of ribosome"/>
    <property type="evidence" value="ECO:0007669"/>
    <property type="project" value="InterPro"/>
</dbReference>
<dbReference type="GO" id="GO:0006412">
    <property type="term" value="P:translation"/>
    <property type="evidence" value="ECO:0007669"/>
    <property type="project" value="UniProtKB-UniRule"/>
</dbReference>
<dbReference type="FunFam" id="2.40.30.10:FF:000004">
    <property type="entry name" value="50S ribosomal protein L3"/>
    <property type="match status" value="1"/>
</dbReference>
<dbReference type="FunFam" id="3.30.160.810:FF:000001">
    <property type="entry name" value="50S ribosomal protein L3"/>
    <property type="match status" value="1"/>
</dbReference>
<dbReference type="Gene3D" id="3.30.160.810">
    <property type="match status" value="1"/>
</dbReference>
<dbReference type="Gene3D" id="2.40.30.10">
    <property type="entry name" value="Translation factors"/>
    <property type="match status" value="1"/>
</dbReference>
<dbReference type="HAMAP" id="MF_01325_B">
    <property type="entry name" value="Ribosomal_uL3_B"/>
    <property type="match status" value="1"/>
</dbReference>
<dbReference type="InterPro" id="IPR000597">
    <property type="entry name" value="Ribosomal_uL3"/>
</dbReference>
<dbReference type="InterPro" id="IPR019927">
    <property type="entry name" value="Ribosomal_uL3_bac/org-type"/>
</dbReference>
<dbReference type="InterPro" id="IPR019926">
    <property type="entry name" value="Ribosomal_uL3_CS"/>
</dbReference>
<dbReference type="InterPro" id="IPR009000">
    <property type="entry name" value="Transl_B-barrel_sf"/>
</dbReference>
<dbReference type="NCBIfam" id="TIGR03625">
    <property type="entry name" value="L3_bact"/>
    <property type="match status" value="1"/>
</dbReference>
<dbReference type="PANTHER" id="PTHR11229">
    <property type="entry name" value="50S RIBOSOMAL PROTEIN L3"/>
    <property type="match status" value="1"/>
</dbReference>
<dbReference type="PANTHER" id="PTHR11229:SF16">
    <property type="entry name" value="LARGE RIBOSOMAL SUBUNIT PROTEIN UL3C"/>
    <property type="match status" value="1"/>
</dbReference>
<dbReference type="Pfam" id="PF00297">
    <property type="entry name" value="Ribosomal_L3"/>
    <property type="match status" value="1"/>
</dbReference>
<dbReference type="SUPFAM" id="SSF50447">
    <property type="entry name" value="Translation proteins"/>
    <property type="match status" value="1"/>
</dbReference>
<dbReference type="PROSITE" id="PS00474">
    <property type="entry name" value="RIBOSOMAL_L3"/>
    <property type="match status" value="1"/>
</dbReference>
<evidence type="ECO:0000255" key="1">
    <source>
        <dbReference type="HAMAP-Rule" id="MF_01325"/>
    </source>
</evidence>
<evidence type="ECO:0000256" key="2">
    <source>
        <dbReference type="SAM" id="MobiDB-lite"/>
    </source>
</evidence>
<evidence type="ECO:0000305" key="3"/>
<name>RL3_PSYWF</name>
<feature type="chain" id="PRO_1000073254" description="Large ribosomal subunit protein uL3">
    <location>
        <begin position="1"/>
        <end position="212"/>
    </location>
</feature>
<feature type="region of interest" description="Disordered" evidence="2">
    <location>
        <begin position="147"/>
        <end position="166"/>
    </location>
</feature>
<feature type="modified residue" description="N5-methylglutamine" evidence="1">
    <location>
        <position position="153"/>
    </location>
</feature>
<proteinExistence type="inferred from homology"/>
<organism>
    <name type="scientific">Psychrobacter sp. (strain PRwf-1)</name>
    <dbReference type="NCBI Taxonomy" id="349106"/>
    <lineage>
        <taxon>Bacteria</taxon>
        <taxon>Pseudomonadati</taxon>
        <taxon>Pseudomonadota</taxon>
        <taxon>Gammaproteobacteria</taxon>
        <taxon>Moraxellales</taxon>
        <taxon>Moraxellaceae</taxon>
        <taxon>Psychrobacter</taxon>
    </lineage>
</organism>
<comment type="function">
    <text evidence="1">One of the primary rRNA binding proteins, it binds directly near the 3'-end of the 23S rRNA, where it nucleates assembly of the 50S subunit.</text>
</comment>
<comment type="subunit">
    <text evidence="1">Part of the 50S ribosomal subunit. Forms a cluster with proteins L14 and L19.</text>
</comment>
<comment type="PTM">
    <text evidence="1">Methylated by PrmB.</text>
</comment>
<comment type="similarity">
    <text evidence="1">Belongs to the universal ribosomal protein uL3 family.</text>
</comment>
<sequence>MAIGLVGKKCGMTRVFTETGASIPVTVVEVDANRITQIKTNDTDGYQAIQITTGERRDSRVTAAQKGHFAKAGVKAGRGVWEFRVTEEELEGREAGSEIAADLFEAGQLVDVTGQSKGKGFQGGVKRHNFSMQDATHGNSVSHRVLGSTGQNQSPGKVFKGKKMPGQMGNKRVTVQGLEVVSVDAEKGLLVIKGAIPGANGGDVIVRPSIKA</sequence>
<accession>A5WCJ0</accession>